<accession>P21733</accession>
<geneLocation type="plasmid">
    <name>unnamed</name>
</geneLocation>
<reference key="1">
    <citation type="journal article" date="1989" name="J. Bacteriol.">
        <title>Two highly related insecticidal crystal proteins of Bacillus thuringiensis subsp. kurstaki possess different host range specificities.</title>
        <authorList>
            <person name="Widner W.R."/>
            <person name="Whiteley H.R."/>
        </authorList>
    </citation>
    <scope>NUCLEOTIDE SEQUENCE [GENOMIC DNA]</scope>
    <scope>INDUCTION</scope>
    <scope>OPERON</scope>
    <scope>REPEAT</scope>
    <source>
        <strain>HD-1</strain>
    </source>
</reference>
<comment type="function">
    <text evidence="1">A protein probably derived from this gene is found in cuboidal crystalline inclusions, but is not toxic even when coexpressed with upstream ORF1. The protein runs anomalously as a 50 kDa band in gels.</text>
</comment>
<comment type="induction">
    <text evidence="2">Transcribed starting in early sporulation and into later stages; not expressed during vegetative growth. Second gene in the orf1-orf2-cry2Aa (cryB1) operon.</text>
</comment>
<comment type="miscellaneous">
    <text evidence="1">Encoded on an unnamed 225 kb plasmid.</text>
</comment>
<organism>
    <name type="scientific">Bacillus thuringiensis subsp. kurstaki</name>
    <dbReference type="NCBI Taxonomy" id="29339"/>
    <lineage>
        <taxon>Bacteria</taxon>
        <taxon>Bacillati</taxon>
        <taxon>Bacillota</taxon>
        <taxon>Bacilli</taxon>
        <taxon>Bacillales</taxon>
        <taxon>Bacillaceae</taxon>
        <taxon>Bacillus</taxon>
        <taxon>Bacillus cereus group</taxon>
    </lineage>
</organism>
<dbReference type="EMBL" id="M23723">
    <property type="protein sequence ID" value="AAA83515.1"/>
    <property type="molecule type" value="Genomic_DNA"/>
</dbReference>
<dbReference type="PIR" id="B32053">
    <property type="entry name" value="B32053"/>
</dbReference>
<dbReference type="RefSeq" id="WP_000922362.1">
    <property type="nucleotide sequence ID" value="NZ_JABXXL010000001.1"/>
</dbReference>
<keyword id="KW-0614">Plasmid</keyword>
<keyword id="KW-0677">Repeat</keyword>
<name>YCR2_BACTK</name>
<proteinExistence type="evidence at transcript level"/>
<evidence type="ECO:0000269" key="1">
    <source>
    </source>
</evidence>
<evidence type="ECO:0000305" key="2">
    <source>
    </source>
</evidence>
<feature type="chain" id="PRO_0000066178" description="Uncharacterized 29.1 kDa protein in cryB1 5'region">
    <location>
        <begin position="1"/>
        <end position="252"/>
    </location>
</feature>
<feature type="repeat" description="1" evidence="2">
    <location>
        <begin position="68"/>
        <end position="82"/>
    </location>
</feature>
<feature type="repeat" description="2" evidence="2">
    <location>
        <begin position="83"/>
        <end position="97"/>
    </location>
</feature>
<feature type="repeat" description="3" evidence="2">
    <location>
        <begin position="98"/>
        <end position="112"/>
    </location>
</feature>
<feature type="repeat" description="4" evidence="2">
    <location>
        <begin position="113"/>
        <end position="127"/>
    </location>
</feature>
<feature type="repeat" description="5" evidence="2">
    <location>
        <begin position="128"/>
        <end position="142"/>
    </location>
</feature>
<feature type="repeat" description="6" evidence="2">
    <location>
        <begin position="143"/>
        <end position="157"/>
    </location>
</feature>
<feature type="repeat" description="7" evidence="2">
    <location>
        <begin position="158"/>
        <end position="172"/>
    </location>
</feature>
<feature type="repeat" description="8" evidence="2">
    <location>
        <begin position="173"/>
        <end position="187"/>
    </location>
</feature>
<feature type="repeat" description="9" evidence="2">
    <location>
        <begin position="188"/>
        <end position="202"/>
    </location>
</feature>
<feature type="repeat" description="10" evidence="2">
    <location>
        <begin position="203"/>
        <end position="217"/>
    </location>
</feature>
<feature type="repeat" description="11; truncated" evidence="2">
    <location>
        <begin position="218"/>
        <end position="230"/>
    </location>
</feature>
<feature type="repeat" description="12; truncated" evidence="2">
    <location>
        <begin position="231"/>
        <end position="239"/>
    </location>
</feature>
<feature type="repeat" description="13; truncated" evidence="2">
    <location>
        <begin position="240"/>
        <end position="246"/>
    </location>
</feature>
<feature type="region of interest" description="13 X 15 AA tandem repeats" evidence="2">
    <location>
        <begin position="68"/>
        <end position="246"/>
    </location>
</feature>
<protein>
    <recommendedName>
        <fullName>Uncharacterized 29.1 kDa protein in cryB1 5'region</fullName>
    </recommendedName>
    <alternativeName>
        <fullName>ORF2</fullName>
    </alternativeName>
</protein>
<sequence length="252" mass="29111">MLKYHFPNVCEDELINIYSYGDFKGQGKYICLFKIENQSFLFWRNDKGNKIYTNLESISVEIINTNNTYNQSQNVCPQDLVDTYNQSQNVCPQDLVDTYNQSQNVCPQDLVDTYNQSQNVCPQDLVDTYNQSQNVCPQDLVDTYNQSQNVCPQDLVDTYNQSQNVYTQDLIDTYNQSQNVCPQDLVDTYNQSQNVCPQDLVDTYNQSQNVCPQDLVDTYNQSQNVCPQDLNVYTQDLIDTYNQSQNCDCGCK</sequence>